<dbReference type="EC" id="4.1.2.20" evidence="1"/>
<dbReference type="EMBL" id="CP000034">
    <property type="protein sequence ID" value="ABB63315.1"/>
    <property type="molecule type" value="Genomic_DNA"/>
</dbReference>
<dbReference type="RefSeq" id="WP_001058222.1">
    <property type="nucleotide sequence ID" value="NC_007606.1"/>
</dbReference>
<dbReference type="RefSeq" id="YP_404806.1">
    <property type="nucleotide sequence ID" value="NC_007606.1"/>
</dbReference>
<dbReference type="SMR" id="Q32BJ0"/>
<dbReference type="STRING" id="300267.SDY_3320"/>
<dbReference type="EnsemblBacteria" id="ABB63315">
    <property type="protein sequence ID" value="ABB63315"/>
    <property type="gene ID" value="SDY_3320"/>
</dbReference>
<dbReference type="KEGG" id="sdy:SDY_3320"/>
<dbReference type="PATRIC" id="fig|300267.13.peg.3972"/>
<dbReference type="HOGENOM" id="CLU_059964_1_0_6"/>
<dbReference type="UniPathway" id="UPA00565">
    <property type="reaction ID" value="UER00630"/>
</dbReference>
<dbReference type="Proteomes" id="UP000002716">
    <property type="component" value="Chromosome"/>
</dbReference>
<dbReference type="GO" id="GO:0005737">
    <property type="term" value="C:cytoplasm"/>
    <property type="evidence" value="ECO:0007669"/>
    <property type="project" value="TreeGrafter"/>
</dbReference>
<dbReference type="GO" id="GO:0008672">
    <property type="term" value="F:2-dehydro-3-deoxyglucarate aldolase activity"/>
    <property type="evidence" value="ECO:0007669"/>
    <property type="project" value="UniProtKB-UniRule"/>
</dbReference>
<dbReference type="GO" id="GO:0000287">
    <property type="term" value="F:magnesium ion binding"/>
    <property type="evidence" value="ECO:0007669"/>
    <property type="project" value="UniProtKB-UniRule"/>
</dbReference>
<dbReference type="GO" id="GO:0042838">
    <property type="term" value="P:D-glucarate catabolic process"/>
    <property type="evidence" value="ECO:0007669"/>
    <property type="project" value="UniProtKB-UniRule"/>
</dbReference>
<dbReference type="GO" id="GO:0046392">
    <property type="term" value="P:galactarate catabolic process"/>
    <property type="evidence" value="ECO:0007669"/>
    <property type="project" value="UniProtKB-UniRule"/>
</dbReference>
<dbReference type="FunFam" id="3.20.20.60:FF:000004">
    <property type="entry name" value="5-keto-4-deoxy-D-glucarate aldolase"/>
    <property type="match status" value="1"/>
</dbReference>
<dbReference type="Gene3D" id="3.20.20.60">
    <property type="entry name" value="Phosphoenolpyruvate-binding domains"/>
    <property type="match status" value="1"/>
</dbReference>
<dbReference type="HAMAP" id="MF_01291">
    <property type="entry name" value="KDGluc_aldolase"/>
    <property type="match status" value="1"/>
</dbReference>
<dbReference type="InterPro" id="IPR005000">
    <property type="entry name" value="Aldolase/citrate-lyase_domain"/>
</dbReference>
<dbReference type="InterPro" id="IPR017648">
    <property type="entry name" value="GarL"/>
</dbReference>
<dbReference type="InterPro" id="IPR050251">
    <property type="entry name" value="HpcH-HpaI_aldolase"/>
</dbReference>
<dbReference type="InterPro" id="IPR015813">
    <property type="entry name" value="Pyrv/PenolPyrv_kinase-like_dom"/>
</dbReference>
<dbReference type="InterPro" id="IPR040442">
    <property type="entry name" value="Pyrv_kinase-like_dom_sf"/>
</dbReference>
<dbReference type="NCBIfam" id="TIGR03239">
    <property type="entry name" value="GarL"/>
    <property type="match status" value="1"/>
</dbReference>
<dbReference type="NCBIfam" id="NF007849">
    <property type="entry name" value="PRK10558.1"/>
    <property type="match status" value="1"/>
</dbReference>
<dbReference type="PANTHER" id="PTHR30502">
    <property type="entry name" value="2-KETO-3-DEOXY-L-RHAMNONATE ALDOLASE"/>
    <property type="match status" value="1"/>
</dbReference>
<dbReference type="PANTHER" id="PTHR30502:SF4">
    <property type="entry name" value="5-KETO-4-DEOXY-D-GLUCARATE ALDOLASE"/>
    <property type="match status" value="1"/>
</dbReference>
<dbReference type="Pfam" id="PF03328">
    <property type="entry name" value="HpcH_HpaI"/>
    <property type="match status" value="1"/>
</dbReference>
<dbReference type="SUPFAM" id="SSF51621">
    <property type="entry name" value="Phosphoenolpyruvate/pyruvate domain"/>
    <property type="match status" value="1"/>
</dbReference>
<accession>Q32BJ0</accession>
<protein>
    <recommendedName>
        <fullName evidence="1">5-keto-4-deoxy-D-glucarate aldolase</fullName>
        <shortName evidence="1">KDGluc aldolase</shortName>
        <shortName evidence="1">KDGlucA</shortName>
        <ecNumber evidence="1">4.1.2.20</ecNumber>
    </recommendedName>
    <alternativeName>
        <fullName evidence="1">2-dehydro-3-deoxy-D-glucarate aldolase</fullName>
    </alternativeName>
    <alternativeName>
        <fullName evidence="1">2-keto-3-deoxy-D-glucarate aldolase</fullName>
    </alternativeName>
    <alternativeName>
        <fullName evidence="1">5-dehydro-4-deoxy-D-glucarate aldolase</fullName>
    </alternativeName>
    <alternativeName>
        <fullName evidence="1">Alpha-keto-beta-deoxy-D-glucarate aldolase</fullName>
    </alternativeName>
</protein>
<gene>
    <name evidence="1" type="primary">garL</name>
    <name type="ordered locus">SDY_3320</name>
</gene>
<keyword id="KW-0456">Lyase</keyword>
<keyword id="KW-0460">Magnesium</keyword>
<keyword id="KW-0479">Metal-binding</keyword>
<keyword id="KW-1185">Reference proteome</keyword>
<sequence>MNNDVFPNKFKAALAAKQVQIGCWSALSNPISTEVLGLAGFDWLVLDGEHAPNDISTFIPQLMALKGSASAPVVRVPTNEPVIIKRLLDIGFYNFLIPFVETKEEAEQAVASTRYPPEGIRGVSVSHRANMFGTVADYFAQSNKNITILVQIESQQGVDNVDAIAATEGVDGIFVGPSDLAAALGHLGNASHPDVQKAIQHIFNRASAHGKPSGILAPVEADARRYLAWGATFVAVGSDLGVFRSATQKLADTFKK</sequence>
<feature type="chain" id="PRO_0000353161" description="5-keto-4-deoxy-D-glucarate aldolase">
    <location>
        <begin position="1"/>
        <end position="256"/>
    </location>
</feature>
<feature type="active site" description="Proton acceptor" evidence="1">
    <location>
        <position position="50"/>
    </location>
</feature>
<feature type="binding site" evidence="1">
    <location>
        <position position="151"/>
    </location>
    <ligand>
        <name>substrate</name>
    </ligand>
</feature>
<feature type="binding site" evidence="1">
    <location>
        <position position="153"/>
    </location>
    <ligand>
        <name>Mg(2+)</name>
        <dbReference type="ChEBI" id="CHEBI:18420"/>
    </ligand>
</feature>
<feature type="binding site" evidence="1">
    <location>
        <position position="178"/>
    </location>
    <ligand>
        <name>substrate</name>
    </ligand>
</feature>
<feature type="binding site" evidence="1">
    <location>
        <position position="179"/>
    </location>
    <ligand>
        <name>Mg(2+)</name>
        <dbReference type="ChEBI" id="CHEBI:18420"/>
    </ligand>
</feature>
<feature type="binding site" evidence="1">
    <location>
        <position position="179"/>
    </location>
    <ligand>
        <name>substrate</name>
    </ligand>
</feature>
<feature type="site" description="Transition state stabilizer" evidence="1">
    <location>
        <position position="75"/>
    </location>
</feature>
<feature type="site" description="Increases basicity of active site His" evidence="1">
    <location>
        <position position="89"/>
    </location>
</feature>
<proteinExistence type="inferred from homology"/>
<comment type="function">
    <text evidence="1">Catalyzes the reversible retro-aldol cleavage of both 5-keto-4-deoxy-D-glucarate and 2-keto-3-deoxy-D-glucarate to pyruvate and tartronic semialdehyde.</text>
</comment>
<comment type="catalytic activity">
    <reaction evidence="1">
        <text>5-dehydro-4-deoxy-D-glucarate = 2-hydroxy-3-oxopropanoate + pyruvate</text>
        <dbReference type="Rhea" id="RHEA:27726"/>
        <dbReference type="ChEBI" id="CHEBI:15361"/>
        <dbReference type="ChEBI" id="CHEBI:42819"/>
        <dbReference type="ChEBI" id="CHEBI:57978"/>
    </reaction>
</comment>
<comment type="catalytic activity">
    <reaction evidence="1">
        <text>2-dehydro-3-deoxy-D-glucarate = 2-hydroxy-3-oxopropanoate + pyruvate</text>
        <dbReference type="Rhea" id="RHEA:10268"/>
        <dbReference type="ChEBI" id="CHEBI:15361"/>
        <dbReference type="ChEBI" id="CHEBI:57978"/>
        <dbReference type="ChEBI" id="CHEBI:58098"/>
        <dbReference type="EC" id="4.1.2.20"/>
    </reaction>
</comment>
<comment type="cofactor">
    <cofactor evidence="1">
        <name>Mg(2+)</name>
        <dbReference type="ChEBI" id="CHEBI:18420"/>
    </cofactor>
    <text evidence="1">Binds 1 Mg(2+) ion per subunit.</text>
</comment>
<comment type="pathway">
    <text evidence="1">Carbohydrate acid metabolism; galactarate degradation; D-glycerate from galactarate: step 2/3.</text>
</comment>
<comment type="subunit">
    <text evidence="1">Homohexamer; trimer of dimers.</text>
</comment>
<comment type="similarity">
    <text evidence="1">Belongs to the HpcH/HpaI aldolase family. KDGluc aldolase subfamily.</text>
</comment>
<reference key="1">
    <citation type="journal article" date="2005" name="Nucleic Acids Res.">
        <title>Genome dynamics and diversity of Shigella species, the etiologic agents of bacillary dysentery.</title>
        <authorList>
            <person name="Yang F."/>
            <person name="Yang J."/>
            <person name="Zhang X."/>
            <person name="Chen L."/>
            <person name="Jiang Y."/>
            <person name="Yan Y."/>
            <person name="Tang X."/>
            <person name="Wang J."/>
            <person name="Xiong Z."/>
            <person name="Dong J."/>
            <person name="Xue Y."/>
            <person name="Zhu Y."/>
            <person name="Xu X."/>
            <person name="Sun L."/>
            <person name="Chen S."/>
            <person name="Nie H."/>
            <person name="Peng J."/>
            <person name="Xu J."/>
            <person name="Wang Y."/>
            <person name="Yuan Z."/>
            <person name="Wen Y."/>
            <person name="Yao Z."/>
            <person name="Shen Y."/>
            <person name="Qiang B."/>
            <person name="Hou Y."/>
            <person name="Yu J."/>
            <person name="Jin Q."/>
        </authorList>
    </citation>
    <scope>NUCLEOTIDE SEQUENCE [LARGE SCALE GENOMIC DNA]</scope>
    <source>
        <strain>Sd197</strain>
    </source>
</reference>
<organism>
    <name type="scientific">Shigella dysenteriae serotype 1 (strain Sd197)</name>
    <dbReference type="NCBI Taxonomy" id="300267"/>
    <lineage>
        <taxon>Bacteria</taxon>
        <taxon>Pseudomonadati</taxon>
        <taxon>Pseudomonadota</taxon>
        <taxon>Gammaproteobacteria</taxon>
        <taxon>Enterobacterales</taxon>
        <taxon>Enterobacteriaceae</taxon>
        <taxon>Shigella</taxon>
    </lineage>
</organism>
<evidence type="ECO:0000255" key="1">
    <source>
        <dbReference type="HAMAP-Rule" id="MF_01291"/>
    </source>
</evidence>
<name>GARL_SHIDS</name>